<comment type="function">
    <text evidence="1">Intramembrane-cleaving serine protease that cleaves single transmembrane or multi-pass membrane proteins in the hydrophobic plane of the membrane, luminal loops and juxtamembrane regions. Involved in regulated intramembrane proteolysis and the subsequent release of functional polypeptides from their membrane anchors. Functional component of endoplasmic reticulum-associated degradation (ERAD) for misfolded membrane proteins. Required for the degradation process of some specific misfolded endoplasmic reticulum (ER) luminal proteins. Participates in the transfer of misfolded proteins from the ER to the cytosol, where they are destroyed by the proteasome in a ubiquitin-dependent manner. Functions in BIK, MPZ, PKD1, PTCRA, RHO, STEAP3 and TRAC processing. Involved in the regulation of exosomal secretion; inhibits the TSAP6-mediated secretion pathway. Involved in the regulation of apoptosis; modulates BIK-mediated apoptotic activity. Also plays a role in the regulation of spermatogenesis; inhibits apoptotic activity in spermatogonia (By similarity).</text>
</comment>
<comment type="catalytic activity">
    <reaction>
        <text>Cleaves type-1 transmembrane domains using a catalytic dyad composed of serine and histidine that are contributed by different transmembrane domains.</text>
        <dbReference type="EC" id="3.4.21.105"/>
    </reaction>
</comment>
<comment type="activity regulation">
    <text evidence="1">Inhibited by aprotinin.</text>
</comment>
<comment type="subunit">
    <text evidence="1">Interacts with BIK and STEAP3. Interacts (via C-terminal domain) with VCP. Interacts with ubiquitin and ubiquitinated proteins (By similarity).</text>
</comment>
<comment type="subcellular location">
    <subcellularLocation>
        <location evidence="2">Endoplasmic reticulum membrane</location>
        <topology evidence="3">Multi-pass membrane protein</topology>
    </subcellularLocation>
    <subcellularLocation>
        <location evidence="2">Mitochondrion membrane</location>
        <topology evidence="3">Multi-pass membrane protein</topology>
    </subcellularLocation>
</comment>
<comment type="tissue specificity">
    <text evidence="4">Expressed in intestine, lung, brain, kidney, epididymis and testis.</text>
</comment>
<comment type="similarity">
    <text evidence="5">Belongs to the peptidase S54 family.</text>
</comment>
<comment type="caution">
    <text evidence="2">One study reported that the protein is not localized in the mitochondrion.</text>
</comment>
<sequence>MQRRTRGIDTGLLLLLSQVFHIGINNIPPVTLATLAVNVWFFLNPWKPLYHSCISVEKCYQQNDWQRLLLSPVHHGDDWHLYFNMVSMLWKGVKLEKRLGSRWFAYIIATFSLLTGVVYLLLQFASAELMNQPDFKRNCAVGFSGVLFALKVLSNHYCPGGFVNILGFPVPNRFACWAELAAIHFCTPGTSFAGHLAGILVGLMYTQGPLKKIMDACAGIFISNAGSSGQQYHFNNAGPSGYQNRYTDGRPVNYEATYRNYDIYTAGLSEEEQLERALRASIWDRGNTRNGPIPYGFRLPPEEEMRRQRLHRFDGQ</sequence>
<protein>
    <recommendedName>
        <fullName>Rhomboid-related protein 4</fullName>
        <shortName>RRP4</shortName>
        <ecNumber>3.4.21.105</ecNumber>
    </recommendedName>
    <alternativeName>
        <fullName>Rhomboid domain-containing protein 1</fullName>
        <shortName>rRHBDD1</shortName>
    </alternativeName>
    <alternativeName>
        <fullName>Rhomboid-like protein 4</fullName>
    </alternativeName>
</protein>
<keyword id="KW-0053">Apoptosis</keyword>
<keyword id="KW-0221">Differentiation</keyword>
<keyword id="KW-0256">Endoplasmic reticulum</keyword>
<keyword id="KW-0378">Hydrolase</keyword>
<keyword id="KW-0472">Membrane</keyword>
<keyword id="KW-0496">Mitochondrion</keyword>
<keyword id="KW-0645">Protease</keyword>
<keyword id="KW-1185">Reference proteome</keyword>
<keyword id="KW-0720">Serine protease</keyword>
<keyword id="KW-0744">Spermatogenesis</keyword>
<keyword id="KW-0812">Transmembrane</keyword>
<keyword id="KW-1133">Transmembrane helix</keyword>
<feature type="chain" id="PRO_0000254192" description="Rhomboid-related protein 4">
    <location>
        <begin position="1"/>
        <end position="316"/>
    </location>
</feature>
<feature type="topological domain" description="Cytoplasmic" evidence="3">
    <location>
        <begin position="1"/>
        <end position="21"/>
    </location>
</feature>
<feature type="transmembrane region" description="Helical" evidence="3">
    <location>
        <begin position="22"/>
        <end position="42"/>
    </location>
</feature>
<feature type="topological domain" description="Extracellular" evidence="3">
    <location>
        <begin position="43"/>
        <end position="103"/>
    </location>
</feature>
<feature type="transmembrane region" description="Helical" evidence="3">
    <location>
        <begin position="104"/>
        <end position="124"/>
    </location>
</feature>
<feature type="topological domain" description="Cytoplasmic" evidence="3">
    <location>
        <begin position="125"/>
        <end position="137"/>
    </location>
</feature>
<feature type="transmembrane region" description="Helical" evidence="3">
    <location>
        <begin position="138"/>
        <end position="154"/>
    </location>
</feature>
<feature type="topological domain" description="Extracellular" evidence="3">
    <location>
        <begin position="155"/>
        <end position="182"/>
    </location>
</feature>
<feature type="transmembrane region" description="Helical" evidence="3">
    <location>
        <begin position="183"/>
        <end position="203"/>
    </location>
</feature>
<feature type="topological domain" description="Cytoplasmic" evidence="3">
    <location>
        <begin position="204"/>
        <end position="316"/>
    </location>
</feature>
<feature type="region of interest" description="Ubiquitin-binding domain (UBD)" evidence="1">
    <location>
        <begin position="269"/>
        <end position="284"/>
    </location>
</feature>
<feature type="region of interest" description="VCP/p97-interacting motif (VIM)" evidence="1">
    <location>
        <begin position="301"/>
        <end position="316"/>
    </location>
</feature>
<feature type="active site" description="Nucleophile" evidence="1">
    <location>
        <position position="144"/>
    </location>
</feature>
<feature type="active site" evidence="1">
    <location>
        <position position="195"/>
    </location>
</feature>
<gene>
    <name type="primary">Rhbdd1</name>
    <name type="synonym">Rhbdl4</name>
</gene>
<organism>
    <name type="scientific">Rattus norvegicus</name>
    <name type="common">Rat</name>
    <dbReference type="NCBI Taxonomy" id="10116"/>
    <lineage>
        <taxon>Eukaryota</taxon>
        <taxon>Metazoa</taxon>
        <taxon>Chordata</taxon>
        <taxon>Craniata</taxon>
        <taxon>Vertebrata</taxon>
        <taxon>Euteleostomi</taxon>
        <taxon>Mammalia</taxon>
        <taxon>Eutheria</taxon>
        <taxon>Euarchontoglires</taxon>
        <taxon>Glires</taxon>
        <taxon>Rodentia</taxon>
        <taxon>Myomorpha</taxon>
        <taxon>Muroidea</taxon>
        <taxon>Muridae</taxon>
        <taxon>Murinae</taxon>
        <taxon>Rattus</taxon>
    </lineage>
</organism>
<reference key="1">
    <citation type="journal article" date="2004" name="Genome Res.">
        <title>The status, quality, and expansion of the NIH full-length cDNA project: the Mammalian Gene Collection (MGC).</title>
        <authorList>
            <consortium name="The MGC Project Team"/>
        </authorList>
    </citation>
    <scope>NUCLEOTIDE SEQUENCE [LARGE SCALE MRNA]</scope>
    <source>
        <tissue>Testis</tissue>
    </source>
</reference>
<reference key="2">
    <citation type="journal article" date="2009" name="BMC Cell Biol.">
        <title>GC-1 mRHBDD1 knockdown spermatogonia cells lose their spermatogenic capacity in mouse seminiferous tubules.</title>
        <authorList>
            <person name="Wang Y."/>
            <person name="Song W."/>
            <person name="Li S."/>
            <person name="Guan X."/>
            <person name="Miao S."/>
            <person name="Zong S."/>
            <person name="Koide S.S."/>
            <person name="Wang L."/>
        </authorList>
    </citation>
    <scope>TISSUE SPECIFICITY</scope>
</reference>
<dbReference type="EC" id="3.4.21.105"/>
<dbReference type="EMBL" id="BC097416">
    <property type="protein sequence ID" value="AAH97416.1"/>
    <property type="molecule type" value="mRNA"/>
</dbReference>
<dbReference type="RefSeq" id="NP_001020062.1">
    <property type="nucleotide sequence ID" value="NM_001024891.2"/>
</dbReference>
<dbReference type="RefSeq" id="NP_001418948.1">
    <property type="nucleotide sequence ID" value="NM_001432019.1"/>
</dbReference>
<dbReference type="RefSeq" id="XP_008765472.1">
    <property type="nucleotide sequence ID" value="XM_008767250.2"/>
</dbReference>
<dbReference type="FunCoup" id="Q4V8F3">
    <property type="interactions" value="1900"/>
</dbReference>
<dbReference type="STRING" id="10116.ENSRNOP00000070041"/>
<dbReference type="PhosphoSitePlus" id="Q4V8F3"/>
<dbReference type="PaxDb" id="10116-ENSRNOP00000019898"/>
<dbReference type="Ensembl" id="ENSRNOT00000107081.1">
    <property type="protein sequence ID" value="ENSRNOP00000082541.1"/>
    <property type="gene ID" value="ENSRNOG00000054963.2"/>
</dbReference>
<dbReference type="GeneID" id="316557"/>
<dbReference type="KEGG" id="rno:316557"/>
<dbReference type="UCSC" id="RGD:1306477">
    <property type="organism name" value="rat"/>
</dbReference>
<dbReference type="AGR" id="RGD:1306477"/>
<dbReference type="CTD" id="84236"/>
<dbReference type="RGD" id="1306477">
    <property type="gene designation" value="Rhbdd1"/>
</dbReference>
<dbReference type="eggNOG" id="KOG2632">
    <property type="taxonomic scope" value="Eukaryota"/>
</dbReference>
<dbReference type="GeneTree" id="ENSGT00390000010744"/>
<dbReference type="HOGENOM" id="CLU_075166_0_0_1"/>
<dbReference type="InParanoid" id="Q4V8F3"/>
<dbReference type="OMA" id="IWFAYII"/>
<dbReference type="OrthoDB" id="10257275at2759"/>
<dbReference type="PhylomeDB" id="Q4V8F3"/>
<dbReference type="TreeFam" id="TF328476"/>
<dbReference type="PRO" id="PR:Q4V8F3"/>
<dbReference type="Proteomes" id="UP000002494">
    <property type="component" value="Chromosome 9"/>
</dbReference>
<dbReference type="Bgee" id="ENSRNOG00000054963">
    <property type="expression patterns" value="Expressed in testis and 19 other cell types or tissues"/>
</dbReference>
<dbReference type="GO" id="GO:0005783">
    <property type="term" value="C:endoplasmic reticulum"/>
    <property type="evidence" value="ECO:0000266"/>
    <property type="project" value="RGD"/>
</dbReference>
<dbReference type="GO" id="GO:0005789">
    <property type="term" value="C:endoplasmic reticulum membrane"/>
    <property type="evidence" value="ECO:0000250"/>
    <property type="project" value="UniProtKB"/>
</dbReference>
<dbReference type="GO" id="GO:0044322">
    <property type="term" value="C:endoplasmic reticulum quality control compartment"/>
    <property type="evidence" value="ECO:0000250"/>
    <property type="project" value="UniProtKB"/>
</dbReference>
<dbReference type="GO" id="GO:0031966">
    <property type="term" value="C:mitochondrial membrane"/>
    <property type="evidence" value="ECO:0007669"/>
    <property type="project" value="UniProtKB-SubCell"/>
</dbReference>
<dbReference type="GO" id="GO:0004175">
    <property type="term" value="F:endopeptidase activity"/>
    <property type="evidence" value="ECO:0000250"/>
    <property type="project" value="UniProtKB"/>
</dbReference>
<dbReference type="GO" id="GO:0008233">
    <property type="term" value="F:peptidase activity"/>
    <property type="evidence" value="ECO:0000266"/>
    <property type="project" value="RGD"/>
</dbReference>
<dbReference type="GO" id="GO:0004252">
    <property type="term" value="F:serine-type endopeptidase activity"/>
    <property type="evidence" value="ECO:0000250"/>
    <property type="project" value="UniProtKB"/>
</dbReference>
<dbReference type="GO" id="GO:0006915">
    <property type="term" value="P:apoptotic process"/>
    <property type="evidence" value="ECO:0007669"/>
    <property type="project" value="UniProtKB-KW"/>
</dbReference>
<dbReference type="GO" id="GO:0034620">
    <property type="term" value="P:cellular response to unfolded protein"/>
    <property type="evidence" value="ECO:0000250"/>
    <property type="project" value="UniProtKB"/>
</dbReference>
<dbReference type="GO" id="GO:0034644">
    <property type="term" value="P:cellular response to UV"/>
    <property type="evidence" value="ECO:0000250"/>
    <property type="project" value="UniProtKB"/>
</dbReference>
<dbReference type="GO" id="GO:0036503">
    <property type="term" value="P:ERAD pathway"/>
    <property type="evidence" value="ECO:0000250"/>
    <property type="project" value="UniProtKB"/>
</dbReference>
<dbReference type="GO" id="GO:0031293">
    <property type="term" value="P:membrane protein intracellular domain proteolysis"/>
    <property type="evidence" value="ECO:0000250"/>
    <property type="project" value="UniProtKB"/>
</dbReference>
<dbReference type="GO" id="GO:0033619">
    <property type="term" value="P:membrane protein proteolysis"/>
    <property type="evidence" value="ECO:0000250"/>
    <property type="project" value="UniProtKB"/>
</dbReference>
<dbReference type="GO" id="GO:1904211">
    <property type="term" value="P:membrane protein proteolysis involved in retrograde protein transport, ER to cytosol"/>
    <property type="evidence" value="ECO:0000266"/>
    <property type="project" value="RGD"/>
</dbReference>
<dbReference type="GO" id="GO:0043066">
    <property type="term" value="P:negative regulation of apoptotic process"/>
    <property type="evidence" value="ECO:0000250"/>
    <property type="project" value="UniProtKB"/>
</dbReference>
<dbReference type="GO" id="GO:0045732">
    <property type="term" value="P:positive regulation of protein catabolic process"/>
    <property type="evidence" value="ECO:0000250"/>
    <property type="project" value="UniProtKB"/>
</dbReference>
<dbReference type="GO" id="GO:0010954">
    <property type="term" value="P:positive regulation of protein processing"/>
    <property type="evidence" value="ECO:0000250"/>
    <property type="project" value="UniProtKB"/>
</dbReference>
<dbReference type="GO" id="GO:0051047">
    <property type="term" value="P:positive regulation of secretion"/>
    <property type="evidence" value="ECO:0000250"/>
    <property type="project" value="UniProtKB"/>
</dbReference>
<dbReference type="GO" id="GO:0043687">
    <property type="term" value="P:post-translational protein modification"/>
    <property type="evidence" value="ECO:0000250"/>
    <property type="project" value="UniProtKB"/>
</dbReference>
<dbReference type="GO" id="GO:0048515">
    <property type="term" value="P:spermatid differentiation"/>
    <property type="evidence" value="ECO:0000250"/>
    <property type="project" value="UniProtKB"/>
</dbReference>
<dbReference type="FunFam" id="1.20.1540.10:FF:000009">
    <property type="entry name" value="Rhomboid domain containing 1"/>
    <property type="match status" value="1"/>
</dbReference>
<dbReference type="Gene3D" id="1.20.1540.10">
    <property type="entry name" value="Rhomboid-like"/>
    <property type="match status" value="1"/>
</dbReference>
<dbReference type="InterPro" id="IPR022764">
    <property type="entry name" value="Peptidase_S54_rhomboid_dom"/>
</dbReference>
<dbReference type="InterPro" id="IPR035952">
    <property type="entry name" value="Rhomboid-like_sf"/>
</dbReference>
<dbReference type="PANTHER" id="PTHR43066">
    <property type="entry name" value="RHOMBOID-RELATED PROTEIN"/>
    <property type="match status" value="1"/>
</dbReference>
<dbReference type="PANTHER" id="PTHR43066:SF14">
    <property type="entry name" value="RHOMBOID-RELATED PROTEIN 4"/>
    <property type="match status" value="1"/>
</dbReference>
<dbReference type="Pfam" id="PF01694">
    <property type="entry name" value="Rhomboid"/>
    <property type="match status" value="1"/>
</dbReference>
<dbReference type="SUPFAM" id="SSF144091">
    <property type="entry name" value="Rhomboid-like"/>
    <property type="match status" value="1"/>
</dbReference>
<proteinExistence type="evidence at transcript level"/>
<name>RHBL4_RAT</name>
<accession>Q4V8F3</accession>
<evidence type="ECO:0000250" key="1"/>
<evidence type="ECO:0000250" key="2">
    <source>
        <dbReference type="UniProtKB" id="Q8TEB9"/>
    </source>
</evidence>
<evidence type="ECO:0000255" key="3"/>
<evidence type="ECO:0000269" key="4">
    <source>
    </source>
</evidence>
<evidence type="ECO:0000305" key="5"/>